<organism>
    <name type="scientific">Rhodococcus erythropolis (strain PR4 / NBRC 100887)</name>
    <dbReference type="NCBI Taxonomy" id="234621"/>
    <lineage>
        <taxon>Bacteria</taxon>
        <taxon>Bacillati</taxon>
        <taxon>Actinomycetota</taxon>
        <taxon>Actinomycetes</taxon>
        <taxon>Mycobacteriales</taxon>
        <taxon>Nocardiaceae</taxon>
        <taxon>Rhodococcus</taxon>
        <taxon>Rhodococcus erythropolis group</taxon>
    </lineage>
</organism>
<keyword id="KW-0687">Ribonucleoprotein</keyword>
<keyword id="KW-0689">Ribosomal protein</keyword>
<proteinExistence type="inferred from homology"/>
<comment type="subunit">
    <text evidence="1">Part of the 50S ribosomal subunit.</text>
</comment>
<comment type="similarity">
    <text evidence="1">Belongs to the bacterial ribosomal protein bL31 family. Type B subfamily.</text>
</comment>
<dbReference type="EMBL" id="AP008957">
    <property type="protein sequence ID" value="BAH35109.1"/>
    <property type="molecule type" value="Genomic_DNA"/>
</dbReference>
<dbReference type="RefSeq" id="WP_003946367.1">
    <property type="nucleotide sequence ID" value="NC_012490.1"/>
</dbReference>
<dbReference type="SMR" id="C1A3C4"/>
<dbReference type="KEGG" id="rer:RER_44010"/>
<dbReference type="eggNOG" id="COG0254">
    <property type="taxonomic scope" value="Bacteria"/>
</dbReference>
<dbReference type="HOGENOM" id="CLU_114306_2_1_11"/>
<dbReference type="Proteomes" id="UP000002204">
    <property type="component" value="Chromosome"/>
</dbReference>
<dbReference type="GO" id="GO:1990904">
    <property type="term" value="C:ribonucleoprotein complex"/>
    <property type="evidence" value="ECO:0007669"/>
    <property type="project" value="UniProtKB-KW"/>
</dbReference>
<dbReference type="GO" id="GO:0005840">
    <property type="term" value="C:ribosome"/>
    <property type="evidence" value="ECO:0007669"/>
    <property type="project" value="UniProtKB-KW"/>
</dbReference>
<dbReference type="GO" id="GO:0003735">
    <property type="term" value="F:structural constituent of ribosome"/>
    <property type="evidence" value="ECO:0007669"/>
    <property type="project" value="InterPro"/>
</dbReference>
<dbReference type="GO" id="GO:0006412">
    <property type="term" value="P:translation"/>
    <property type="evidence" value="ECO:0007669"/>
    <property type="project" value="UniProtKB-UniRule"/>
</dbReference>
<dbReference type="Gene3D" id="4.10.830.30">
    <property type="entry name" value="Ribosomal protein L31"/>
    <property type="match status" value="1"/>
</dbReference>
<dbReference type="HAMAP" id="MF_00502">
    <property type="entry name" value="Ribosomal_bL31_2"/>
    <property type="match status" value="1"/>
</dbReference>
<dbReference type="InterPro" id="IPR034704">
    <property type="entry name" value="Ribosomal_bL28/bL31-like_sf"/>
</dbReference>
<dbReference type="InterPro" id="IPR002150">
    <property type="entry name" value="Ribosomal_bL31"/>
</dbReference>
<dbReference type="InterPro" id="IPR027493">
    <property type="entry name" value="Ribosomal_bL31_B"/>
</dbReference>
<dbReference type="InterPro" id="IPR042105">
    <property type="entry name" value="Ribosomal_bL31_sf"/>
</dbReference>
<dbReference type="NCBIfam" id="TIGR00105">
    <property type="entry name" value="L31"/>
    <property type="match status" value="1"/>
</dbReference>
<dbReference type="NCBIfam" id="NF002462">
    <property type="entry name" value="PRK01678.1"/>
    <property type="match status" value="1"/>
</dbReference>
<dbReference type="PANTHER" id="PTHR33280">
    <property type="entry name" value="50S RIBOSOMAL PROTEIN L31, CHLOROPLASTIC"/>
    <property type="match status" value="1"/>
</dbReference>
<dbReference type="PANTHER" id="PTHR33280:SF1">
    <property type="entry name" value="LARGE RIBOSOMAL SUBUNIT PROTEIN BL31C"/>
    <property type="match status" value="1"/>
</dbReference>
<dbReference type="Pfam" id="PF01197">
    <property type="entry name" value="Ribosomal_L31"/>
    <property type="match status" value="1"/>
</dbReference>
<dbReference type="PRINTS" id="PR01249">
    <property type="entry name" value="RIBOSOMALL31"/>
</dbReference>
<dbReference type="SUPFAM" id="SSF143800">
    <property type="entry name" value="L28p-like"/>
    <property type="match status" value="1"/>
</dbReference>
<dbReference type="PROSITE" id="PS01143">
    <property type="entry name" value="RIBOSOMAL_L31"/>
    <property type="match status" value="1"/>
</dbReference>
<sequence>MKKQMHPDYHPVVFQDASTGKSFLTRSTVTSERTVEWEDGGTYPLLVVDVTSDSHPFWTGAQRVMDTAGRVEKFERRYGKRKAL</sequence>
<feature type="chain" id="PRO_1000206536" description="Large ribosomal subunit protein bL31B">
    <location>
        <begin position="1"/>
        <end position="84"/>
    </location>
</feature>
<gene>
    <name evidence="1" type="primary">rpmE2</name>
    <name type="ordered locus">RER_44010</name>
</gene>
<protein>
    <recommendedName>
        <fullName evidence="1">Large ribosomal subunit protein bL31B</fullName>
    </recommendedName>
    <alternativeName>
        <fullName evidence="2">50S ribosomal protein L31 type B</fullName>
    </alternativeName>
</protein>
<accession>C1A3C4</accession>
<evidence type="ECO:0000255" key="1">
    <source>
        <dbReference type="HAMAP-Rule" id="MF_00502"/>
    </source>
</evidence>
<evidence type="ECO:0000305" key="2"/>
<reference key="1">
    <citation type="submission" date="2005-03" db="EMBL/GenBank/DDBJ databases">
        <title>Comparison of the complete genome sequences of Rhodococcus erythropolis PR4 and Rhodococcus opacus B4.</title>
        <authorList>
            <person name="Takarada H."/>
            <person name="Sekine M."/>
            <person name="Hosoyama A."/>
            <person name="Yamada R."/>
            <person name="Fujisawa T."/>
            <person name="Omata S."/>
            <person name="Shimizu A."/>
            <person name="Tsukatani N."/>
            <person name="Tanikawa S."/>
            <person name="Fujita N."/>
            <person name="Harayama S."/>
        </authorList>
    </citation>
    <scope>NUCLEOTIDE SEQUENCE [LARGE SCALE GENOMIC DNA]</scope>
    <source>
        <strain>PR4 / NBRC 100887</strain>
    </source>
</reference>
<name>RL31B_RHOE4</name>